<name>RL31B_DICNV</name>
<dbReference type="EMBL" id="CP000513">
    <property type="protein sequence ID" value="ABQ13402.1"/>
    <property type="molecule type" value="Genomic_DNA"/>
</dbReference>
<dbReference type="RefSeq" id="WP_012030755.1">
    <property type="nucleotide sequence ID" value="NC_009446.1"/>
</dbReference>
<dbReference type="SMR" id="A5EVX0"/>
<dbReference type="STRING" id="246195.DNO_0417"/>
<dbReference type="KEGG" id="dno:DNO_0417"/>
<dbReference type="eggNOG" id="COG0254">
    <property type="taxonomic scope" value="Bacteria"/>
</dbReference>
<dbReference type="HOGENOM" id="CLU_114306_2_2_6"/>
<dbReference type="OrthoDB" id="9803251at2"/>
<dbReference type="Proteomes" id="UP000000248">
    <property type="component" value="Chromosome"/>
</dbReference>
<dbReference type="GO" id="GO:1990904">
    <property type="term" value="C:ribonucleoprotein complex"/>
    <property type="evidence" value="ECO:0007669"/>
    <property type="project" value="UniProtKB-KW"/>
</dbReference>
<dbReference type="GO" id="GO:0005840">
    <property type="term" value="C:ribosome"/>
    <property type="evidence" value="ECO:0007669"/>
    <property type="project" value="UniProtKB-KW"/>
</dbReference>
<dbReference type="GO" id="GO:0003735">
    <property type="term" value="F:structural constituent of ribosome"/>
    <property type="evidence" value="ECO:0007669"/>
    <property type="project" value="InterPro"/>
</dbReference>
<dbReference type="GO" id="GO:0006412">
    <property type="term" value="P:translation"/>
    <property type="evidence" value="ECO:0007669"/>
    <property type="project" value="UniProtKB-UniRule"/>
</dbReference>
<dbReference type="Gene3D" id="4.10.830.30">
    <property type="entry name" value="Ribosomal protein L31"/>
    <property type="match status" value="1"/>
</dbReference>
<dbReference type="HAMAP" id="MF_00502">
    <property type="entry name" value="Ribosomal_bL31_2"/>
    <property type="match status" value="1"/>
</dbReference>
<dbReference type="InterPro" id="IPR034704">
    <property type="entry name" value="Ribosomal_bL28/bL31-like_sf"/>
</dbReference>
<dbReference type="InterPro" id="IPR002150">
    <property type="entry name" value="Ribosomal_bL31"/>
</dbReference>
<dbReference type="InterPro" id="IPR027493">
    <property type="entry name" value="Ribosomal_bL31_B"/>
</dbReference>
<dbReference type="InterPro" id="IPR042105">
    <property type="entry name" value="Ribosomal_bL31_sf"/>
</dbReference>
<dbReference type="NCBIfam" id="TIGR00105">
    <property type="entry name" value="L31"/>
    <property type="match status" value="1"/>
</dbReference>
<dbReference type="NCBIfam" id="NF002462">
    <property type="entry name" value="PRK01678.1"/>
    <property type="match status" value="1"/>
</dbReference>
<dbReference type="PANTHER" id="PTHR33280">
    <property type="entry name" value="50S RIBOSOMAL PROTEIN L31, CHLOROPLASTIC"/>
    <property type="match status" value="1"/>
</dbReference>
<dbReference type="PANTHER" id="PTHR33280:SF1">
    <property type="entry name" value="LARGE RIBOSOMAL SUBUNIT PROTEIN BL31C"/>
    <property type="match status" value="1"/>
</dbReference>
<dbReference type="Pfam" id="PF01197">
    <property type="entry name" value="Ribosomal_L31"/>
    <property type="match status" value="1"/>
</dbReference>
<dbReference type="PRINTS" id="PR01249">
    <property type="entry name" value="RIBOSOMALL31"/>
</dbReference>
<dbReference type="SUPFAM" id="SSF143800">
    <property type="entry name" value="L28p-like"/>
    <property type="match status" value="1"/>
</dbReference>
<dbReference type="PROSITE" id="PS01143">
    <property type="entry name" value="RIBOSOMAL_L31"/>
    <property type="match status" value="1"/>
</dbReference>
<sequence length="82" mass="9625">MKKDIHPAYRPVVFYDASAEFKILTRSTVETKETIQWEDGNEYPLVRIDVSSKSHPFYTGKQNIVDTAGRVDRFRRKYGKKN</sequence>
<feature type="chain" id="PRO_1000126801" description="Large ribosomal subunit protein bL31B">
    <location>
        <begin position="1"/>
        <end position="82"/>
    </location>
</feature>
<protein>
    <recommendedName>
        <fullName evidence="1">Large ribosomal subunit protein bL31B</fullName>
    </recommendedName>
    <alternativeName>
        <fullName evidence="2">50S ribosomal protein L31 type B</fullName>
    </alternativeName>
</protein>
<reference key="1">
    <citation type="journal article" date="2007" name="Nat. Biotechnol.">
        <title>Genome sequence and identification of candidate vaccine antigens from the animal pathogen Dichelobacter nodosus.</title>
        <authorList>
            <person name="Myers G.S.A."/>
            <person name="Parker D."/>
            <person name="Al-Hasani K."/>
            <person name="Kennan R.M."/>
            <person name="Seemann T."/>
            <person name="Ren Q."/>
            <person name="Badger J.H."/>
            <person name="Selengut J.D."/>
            <person name="Deboy R.T."/>
            <person name="Tettelin H."/>
            <person name="Boyce J.D."/>
            <person name="McCarl V.P."/>
            <person name="Han X."/>
            <person name="Nelson W.C."/>
            <person name="Madupu R."/>
            <person name="Mohamoud Y."/>
            <person name="Holley T."/>
            <person name="Fedorova N."/>
            <person name="Khouri H."/>
            <person name="Bottomley S.P."/>
            <person name="Whittington R.J."/>
            <person name="Adler B."/>
            <person name="Songer J.G."/>
            <person name="Rood J.I."/>
            <person name="Paulsen I.T."/>
        </authorList>
    </citation>
    <scope>NUCLEOTIDE SEQUENCE [LARGE SCALE GENOMIC DNA]</scope>
    <source>
        <strain>VCS1703A</strain>
    </source>
</reference>
<proteinExistence type="inferred from homology"/>
<comment type="subunit">
    <text evidence="1">Part of the 50S ribosomal subunit.</text>
</comment>
<comment type="similarity">
    <text evidence="1">Belongs to the bacterial ribosomal protein bL31 family. Type B subfamily.</text>
</comment>
<gene>
    <name evidence="1" type="primary">rpmE2</name>
    <name type="ordered locus">DNO_0417</name>
</gene>
<accession>A5EVX0</accession>
<keyword id="KW-1185">Reference proteome</keyword>
<keyword id="KW-0687">Ribonucleoprotein</keyword>
<keyword id="KW-0689">Ribosomal protein</keyword>
<evidence type="ECO:0000255" key="1">
    <source>
        <dbReference type="HAMAP-Rule" id="MF_00502"/>
    </source>
</evidence>
<evidence type="ECO:0000305" key="2"/>
<organism>
    <name type="scientific">Dichelobacter nodosus (strain VCS1703A)</name>
    <dbReference type="NCBI Taxonomy" id="246195"/>
    <lineage>
        <taxon>Bacteria</taxon>
        <taxon>Pseudomonadati</taxon>
        <taxon>Pseudomonadota</taxon>
        <taxon>Gammaproteobacteria</taxon>
        <taxon>Cardiobacteriales</taxon>
        <taxon>Cardiobacteriaceae</taxon>
        <taxon>Dichelobacter</taxon>
    </lineage>
</organism>